<gene>
    <name type="ORF">BBRF1</name>
</gene>
<organismHost>
    <name type="scientific">Homo sapiens</name>
    <name type="common">Human</name>
    <dbReference type="NCBI Taxonomy" id="9606"/>
</organismHost>
<protein>
    <recommendedName>
        <fullName evidence="1">Portal protein</fullName>
    </recommendedName>
</protein>
<proteinExistence type="evidence at protein level"/>
<evidence type="ECO:0000255" key="1">
    <source>
        <dbReference type="HAMAP-Rule" id="MF_04012"/>
    </source>
</evidence>
<evidence type="ECO:0000256" key="2">
    <source>
        <dbReference type="SAM" id="MobiDB-lite"/>
    </source>
</evidence>
<evidence type="ECO:0007829" key="3">
    <source>
        <dbReference type="PDB" id="6RVR"/>
    </source>
</evidence>
<sequence>MFNMNVDESASGALGSSAIPVHPTPASVRLFEILQGKYAYVQGQTIYANLRNPGVFSRQVFTHLFKRAISHCTYDDVLHDWNKFEACIQKRWPSDDSCASRFRESTFESWSTTMKLTVRDLLTTNIYRVLHSRSVLSYERYVDWICATGMVPAVKKPITQELHSKIKSLRDRCVCRELGHERTIRSIGTELYEATREIIESLNSTFIPQFTEVTIEYLPRSDEYVAYYCGRRIRLHVLFPPAIFAGTVTFDSPVQRLYQNIFMCYRTLEHAKICQLLNTAPLKAIVGHGGRDMYKDILAHLEQNSQRKDPKKELLNLLVKLSENKTISGVTDVVEEFITDASNNLVDRNRLFGQPGETAAQGLKKKVSNTVVKCLTDQINEQFDQINGLEKERELYLKKIRSMESQLQASLGPGGNNPAASAPAAVAAEAASVDILTGSTASAIEKLFNSPSASLGARVSGHNESILNSFVSQYIPPSREMTKDLTELWESELFNTFKLTPVVDNQGQRLYVRYSSDTISILLGPFTYLVAELSPVELVTDVYATLGIVEIIDELYRSSRLAIYIEDLGRKYCPASATGGDHGIRQAPSARGDAEPDHAKSKPARDPPPGAGS</sequence>
<feature type="chain" id="PRO_0000375973" description="Portal protein">
    <location>
        <begin position="1"/>
        <end position="613"/>
    </location>
</feature>
<feature type="region of interest" description="Disordered" evidence="2">
    <location>
        <begin position="577"/>
        <end position="613"/>
    </location>
</feature>
<feature type="compositionally biased region" description="Basic and acidic residues" evidence="2">
    <location>
        <begin position="592"/>
        <end position="605"/>
    </location>
</feature>
<feature type="helix" evidence="3">
    <location>
        <begin position="25"/>
        <end position="35"/>
    </location>
</feature>
<feature type="helix" evidence="3">
    <location>
        <begin position="44"/>
        <end position="49"/>
    </location>
</feature>
<feature type="helix" evidence="3">
    <location>
        <begin position="55"/>
        <end position="69"/>
    </location>
</feature>
<feature type="helix" evidence="3">
    <location>
        <begin position="76"/>
        <end position="91"/>
    </location>
</feature>
<feature type="helix" evidence="3">
    <location>
        <begin position="101"/>
        <end position="131"/>
    </location>
</feature>
<feature type="helix" evidence="3">
    <location>
        <begin position="139"/>
        <end position="148"/>
    </location>
</feature>
<feature type="strand" evidence="3">
    <location>
        <begin position="149"/>
        <end position="155"/>
    </location>
</feature>
<feature type="helix" evidence="3">
    <location>
        <begin position="160"/>
        <end position="163"/>
    </location>
</feature>
<feature type="helix" evidence="3">
    <location>
        <begin position="165"/>
        <end position="170"/>
    </location>
</feature>
<feature type="helix" evidence="3">
    <location>
        <begin position="182"/>
        <end position="202"/>
    </location>
</feature>
<feature type="strand" evidence="3">
    <location>
        <begin position="204"/>
        <end position="206"/>
    </location>
</feature>
<feature type="strand" evidence="3">
    <location>
        <begin position="210"/>
        <end position="218"/>
    </location>
</feature>
<feature type="turn" evidence="3">
    <location>
        <begin position="219"/>
        <end position="222"/>
    </location>
</feature>
<feature type="strand" evidence="3">
    <location>
        <begin position="223"/>
        <end position="230"/>
    </location>
</feature>
<feature type="strand" evidence="3">
    <location>
        <begin position="234"/>
        <end position="239"/>
    </location>
</feature>
<feature type="helix" evidence="3">
    <location>
        <begin position="253"/>
        <end position="275"/>
    </location>
</feature>
<feature type="turn" evidence="3">
    <location>
        <begin position="276"/>
        <end position="279"/>
    </location>
</feature>
<feature type="strand" evidence="3">
    <location>
        <begin position="280"/>
        <end position="282"/>
    </location>
</feature>
<feature type="strand" evidence="3">
    <location>
        <begin position="284"/>
        <end position="286"/>
    </location>
</feature>
<feature type="helix" evidence="3">
    <location>
        <begin position="442"/>
        <end position="447"/>
    </location>
</feature>
<feature type="strand" evidence="3">
    <location>
        <begin position="456"/>
        <end position="458"/>
    </location>
</feature>
<feature type="strand" evidence="3">
    <location>
        <begin position="466"/>
        <end position="469"/>
    </location>
</feature>
<feature type="helix" evidence="3">
    <location>
        <begin position="481"/>
        <end position="495"/>
    </location>
</feature>
<feature type="turn" evidence="3">
    <location>
        <begin position="496"/>
        <end position="498"/>
    </location>
</feature>
<feature type="strand" evidence="3">
    <location>
        <begin position="500"/>
        <end position="502"/>
    </location>
</feature>
<feature type="strand" evidence="3">
    <location>
        <begin position="511"/>
        <end position="513"/>
    </location>
</feature>
<feature type="helix" evidence="3">
    <location>
        <begin position="516"/>
        <end position="527"/>
    </location>
</feature>
<feature type="turn" evidence="3">
    <location>
        <begin position="528"/>
        <end position="530"/>
    </location>
</feature>
<feature type="helix" evidence="3">
    <location>
        <begin position="542"/>
        <end position="544"/>
    </location>
</feature>
<feature type="helix" evidence="3">
    <location>
        <begin position="548"/>
        <end position="557"/>
    </location>
</feature>
<feature type="helix" evidence="3">
    <location>
        <begin position="560"/>
        <end position="569"/>
    </location>
</feature>
<accession>Q3KSR9</accession>
<dbReference type="EMBL" id="AY961628">
    <property type="protein sequence ID" value="AAY41130.1"/>
    <property type="molecule type" value="Genomic_DNA"/>
</dbReference>
<dbReference type="PDB" id="6RVR">
    <property type="method" value="EM"/>
    <property type="resolution" value="3.46 A"/>
    <property type="chains" value="A/B/C/D/E/F/G/H/I/J/K/L=1-613"/>
</dbReference>
<dbReference type="PDB" id="6RVS">
    <property type="method" value="EM"/>
    <property type="resolution" value="3.59 A"/>
    <property type="chains" value="A/B/C/D/E/F/G/H/I/J/K/L=1-613"/>
</dbReference>
<dbReference type="PDBsum" id="6RVR"/>
<dbReference type="PDBsum" id="6RVS"/>
<dbReference type="SMR" id="Q3KSR9"/>
<dbReference type="IntAct" id="Q3KSR9">
    <property type="interactions" value="2"/>
</dbReference>
<dbReference type="MINT" id="Q3KSR9"/>
<dbReference type="Proteomes" id="UP000007641">
    <property type="component" value="Genome"/>
</dbReference>
<dbReference type="GO" id="GO:0042025">
    <property type="term" value="C:host cell nucleus"/>
    <property type="evidence" value="ECO:0007669"/>
    <property type="project" value="UniProtKB-SubCell"/>
</dbReference>
<dbReference type="GO" id="GO:0044423">
    <property type="term" value="C:virion component"/>
    <property type="evidence" value="ECO:0007669"/>
    <property type="project" value="UniProtKB-KW"/>
</dbReference>
<dbReference type="GO" id="GO:0051276">
    <property type="term" value="P:chromosome organization"/>
    <property type="evidence" value="ECO:0007669"/>
    <property type="project" value="InterPro"/>
</dbReference>
<dbReference type="HAMAP" id="MF_04012">
    <property type="entry name" value="HSV_PORTL"/>
    <property type="match status" value="1"/>
</dbReference>
<dbReference type="InterPro" id="IPR002660">
    <property type="entry name" value="Herpes_Portal"/>
</dbReference>
<dbReference type="Pfam" id="PF01763">
    <property type="entry name" value="Herpes_UL6"/>
    <property type="match status" value="1"/>
</dbReference>
<keyword id="KW-0002">3D-structure</keyword>
<keyword id="KW-1048">Host nucleus</keyword>
<keyword id="KW-0231">Viral genome packaging</keyword>
<keyword id="KW-1188">Viral release from host cell</keyword>
<keyword id="KW-0946">Virion</keyword>
<comment type="function">
    <text evidence="1">Forms a portal in the viral capsid through which viral DNA is translocated during DNA packaging. Assembles as a dodecamer at a single fivefold axe of the T=16 icosahedric capsid. Binds to the molecular motor that translocates the viral DNA, termed terminase.</text>
</comment>
<comment type="subunit">
    <text evidence="1">Homododecamerizes. Interacts with terminase subunits TRM1 and TRM3.</text>
</comment>
<comment type="interaction">
    <interactant intactId="EBI-2621338">
        <id>Q3KSR9</id>
    </interactant>
    <interactant intactId="EBI-2621334">
        <id>P0CK49</id>
        <label>BSRF1</label>
    </interactant>
    <organismsDiffer>true</organismsDiffer>
    <experiments>2</experiments>
</comment>
<comment type="subcellular location">
    <subcellularLocation>
        <location evidence="1">Virion</location>
    </subcellularLocation>
    <subcellularLocation>
        <location evidence="1">Host nucleus</location>
    </subcellularLocation>
</comment>
<comment type="similarity">
    <text evidence="1">Belongs to the herpesviridae portal protein family.</text>
</comment>
<name>PORTL_EBVG</name>
<organism>
    <name type="scientific">Epstein-Barr virus (strain GD1)</name>
    <name type="common">HHV-4</name>
    <name type="synonym">Human gammaherpesvirus 4</name>
    <dbReference type="NCBI Taxonomy" id="10376"/>
    <lineage>
        <taxon>Viruses</taxon>
        <taxon>Duplodnaviria</taxon>
        <taxon>Heunggongvirae</taxon>
        <taxon>Peploviricota</taxon>
        <taxon>Herviviricetes</taxon>
        <taxon>Herpesvirales</taxon>
        <taxon>Orthoherpesviridae</taxon>
        <taxon>Gammaherpesvirinae</taxon>
        <taxon>Lymphocryptovirus</taxon>
        <taxon>Lymphocryptovirus humangamma4</taxon>
    </lineage>
</organism>
<reference key="1">
    <citation type="journal article" date="2005" name="J. Virol.">
        <title>Genomic sequence analysis of Epstein-Barr virus strain GD1 from a nasopharyngeal carcinoma patient.</title>
        <authorList>
            <person name="Zeng M.-S."/>
            <person name="Li D.-J."/>
            <person name="Liu Q.-L."/>
            <person name="Song L.-B."/>
            <person name="Li M.-Z."/>
            <person name="Zhang R.-H."/>
            <person name="Yu X.-J."/>
            <person name="Wang H.-M."/>
            <person name="Ernberg I."/>
            <person name="Zeng Y.-X."/>
        </authorList>
    </citation>
    <scope>NUCLEOTIDE SEQUENCE [LARGE SCALE GENOMIC DNA]</scope>
</reference>